<organism>
    <name type="scientific">Siraitia grosvenorii</name>
    <name type="common">Monk's fruit</name>
    <name type="synonym">Luo han guo</name>
    <dbReference type="NCBI Taxonomy" id="190515"/>
    <lineage>
        <taxon>Eukaryota</taxon>
        <taxon>Viridiplantae</taxon>
        <taxon>Streptophyta</taxon>
        <taxon>Embryophyta</taxon>
        <taxon>Tracheophyta</taxon>
        <taxon>Spermatophyta</taxon>
        <taxon>Magnoliopsida</taxon>
        <taxon>eudicotyledons</taxon>
        <taxon>Gunneridae</taxon>
        <taxon>Pentapetalae</taxon>
        <taxon>rosids</taxon>
        <taxon>fabids</taxon>
        <taxon>Cucurbitales</taxon>
        <taxon>Cucurbitaceae</taxon>
        <taxon>Siraitieae</taxon>
        <taxon>Siraitia</taxon>
    </lineage>
</organism>
<proteinExistence type="evidence at protein level"/>
<feature type="chain" id="PRO_0000451485" description="Mogroside I-E synthase">
    <location>
        <begin position="1"/>
        <end position="454"/>
    </location>
</feature>
<feature type="active site" description="Proton acceptor" evidence="1">
    <location>
        <position position="18"/>
    </location>
</feature>
<feature type="active site" description="Charge relay" evidence="1">
    <location>
        <position position="111"/>
    </location>
</feature>
<feature type="binding site" evidence="2">
    <location>
        <position position="18"/>
    </location>
    <ligand>
        <name>an anthocyanidin</name>
        <dbReference type="ChEBI" id="CHEBI:143576"/>
    </ligand>
</feature>
<feature type="binding site" evidence="2">
    <location>
        <position position="144"/>
    </location>
    <ligand>
        <name>an anthocyanidin</name>
        <dbReference type="ChEBI" id="CHEBI:143576"/>
    </ligand>
</feature>
<feature type="binding site" evidence="6 14">
    <location>
        <position position="278"/>
    </location>
    <ligand>
        <name>UDP-alpha-D-glucose</name>
        <dbReference type="ChEBI" id="CHEBI:58885"/>
    </ligand>
</feature>
<feature type="binding site" evidence="6 14">
    <location>
        <position position="331"/>
    </location>
    <ligand>
        <name>UDP-alpha-D-glucose</name>
        <dbReference type="ChEBI" id="CHEBI:58885"/>
    </ligand>
</feature>
<feature type="binding site" evidence="6 14">
    <location>
        <position position="333"/>
    </location>
    <ligand>
        <name>UDP-alpha-D-glucose</name>
        <dbReference type="ChEBI" id="CHEBI:58885"/>
    </ligand>
</feature>
<feature type="binding site" evidence="6 14">
    <location>
        <position position="351"/>
    </location>
    <ligand>
        <name>UDP-alpha-D-glucose</name>
        <dbReference type="ChEBI" id="CHEBI:58885"/>
    </ligand>
</feature>
<feature type="binding site" evidence="6 14">
    <location>
        <position position="352"/>
    </location>
    <ligand>
        <name>UDP-alpha-D-glucose</name>
        <dbReference type="ChEBI" id="CHEBI:58885"/>
    </ligand>
</feature>
<feature type="binding site" evidence="6 14">
    <location>
        <position position="353"/>
    </location>
    <ligand>
        <name>UDP-alpha-D-glucose</name>
        <dbReference type="ChEBI" id="CHEBI:58885"/>
    </ligand>
</feature>
<feature type="binding site" evidence="6 14">
    <location>
        <position position="356"/>
    </location>
    <ligand>
        <name>UDP-alpha-D-glucose</name>
        <dbReference type="ChEBI" id="CHEBI:58885"/>
    </ligand>
</feature>
<feature type="binding site" evidence="2">
    <location>
        <position position="371"/>
    </location>
    <ligand>
        <name>an anthocyanidin</name>
        <dbReference type="ChEBI" id="CHEBI:143576"/>
    </ligand>
</feature>
<feature type="binding site" evidence="6 14">
    <location>
        <position position="372"/>
    </location>
    <ligand>
        <name>UDP-alpha-D-glucose</name>
        <dbReference type="ChEBI" id="CHEBI:58885"/>
    </ligand>
</feature>
<feature type="binding site" evidence="6 14">
    <location>
        <position position="373"/>
    </location>
    <ligand>
        <name>UDP-alpha-D-glucose</name>
        <dbReference type="ChEBI" id="CHEBI:58885"/>
    </ligand>
</feature>
<feature type="disulfide bond" evidence="6 12 13 14 15">
    <location>
        <begin position="259"/>
        <end position="331"/>
    </location>
</feature>
<feature type="mutagenesis site" description="In UGTMG1; increases catalytic efficiency more than 10000-fold for the 3-OH glycosylation of mogrol, and acquired ability to convert the generated mogroside I-E to mogroside II-E via 24-OH glycosylation; when associated with H-28, R-47, M-48, L-76, Y-79 and I-109." evidence="5 6">
    <original>S</original>
    <variation>A</variation>
    <location>
        <position position="15"/>
    </location>
</feature>
<feature type="mutagenesis site" description="Loss of catalytic activity." evidence="6">
    <original>H</original>
    <variation>A</variation>
    <location>
        <position position="18"/>
    </location>
</feature>
<feature type="mutagenesis site" description="In UGTMG1; increases catalytic efficiency more than 10000-fold for the 3-OH glycosylation of mogrol, and acquired ability to convert the generated mogroside I-E to mogroside II-E via 24-OH glycosylation; when associated with A-15, R-47, M-48, L-76, Y-79 and I-109." evidence="5 6">
    <original>R</original>
    <variation>H</variation>
    <location>
        <position position="28"/>
    </location>
</feature>
<feature type="mutagenesis site" description="In UGTMG1; increases catalytic efficiency more than 10000-fold for the 3-OH glycosylation of mogrol, and acquired ability to convert the generated mogroside I-E to mogroside II-E via 24-OH glycosylation; when associated with A-15, H-28, M-48, L-76, Y-79 and I-109." evidence="5 6">
    <original>H</original>
    <variation>R</variation>
    <location>
        <position position="47"/>
    </location>
</feature>
<feature type="mutagenesis site" description="In UGTMG1; increases catalytic efficiency more than 10000-fold for the 3-OH glycosylation of mogrol, and acquired ability to convert the generated mogroside I-E to mogroside II-E via 24-OH glycosylation; when associated with A-15, H-28, R-47, L-76, Y-79 and I-109." evidence="5 6">
    <original>L</original>
    <variation>M</variation>
    <location>
        <position position="48"/>
    </location>
</feature>
<feature type="mutagenesis site" description="In UGTMG1; increases catalytic efficiency more than 10000-fold for the 3-OH glycosylation of mogrol, and acquired ability to convert the generated mogroside I-E to mogroside II-E via 24-OH glycosylation; when associated with A-15, H-28, R-47, M-48, Y-79 and I-109." evidence="5 6">
    <original>M</original>
    <variation>L</variation>
    <location>
        <position position="76"/>
    </location>
</feature>
<feature type="mutagenesis site" description="In UGTMG1; increases catalytic efficiency more than 10000-fold for the 3-OH glycosylation of mogrol, and acquired ability to convert the generated mogroside I-E to mogroside II-E via 24-OH glycosylation; when associated with A-15, H-28, R-47, M-48, L-76 and I-109." evidence="5 6">
    <original>T</original>
    <variation>Y</variation>
    <location>
        <position position="79"/>
    </location>
</feature>
<feature type="mutagenesis site" description="In UGTMG1; increases catalytic efficiency more than 10000-fold for the 3-OH glycosylation of mogrol, and acquired ability to convert the generated mogroside I-E to mogroside II-E via 24-OH glycosylation; when associated with A-15; H-28; R-47; M-48; L-76 and Y-79." evidence="5 6">
    <original>L</original>
    <variation>I</variation>
    <location>
        <position position="109"/>
    </location>
</feature>
<feature type="mutagenesis site" description="Loss of catalytic activity." evidence="6">
    <original>D</original>
    <variation>A</variation>
    <location>
        <position position="111"/>
    </location>
</feature>
<feature type="strand" evidence="17">
    <location>
        <begin position="7"/>
        <end position="11"/>
    </location>
</feature>
<feature type="turn" evidence="17">
    <location>
        <begin position="16"/>
        <end position="18"/>
    </location>
</feature>
<feature type="helix" evidence="17">
    <location>
        <begin position="20"/>
        <end position="31"/>
    </location>
</feature>
<feature type="strand" evidence="17">
    <location>
        <begin position="35"/>
        <end position="40"/>
    </location>
</feature>
<feature type="helix" evidence="17">
    <location>
        <begin position="42"/>
        <end position="47"/>
    </location>
</feature>
<feature type="strand" evidence="17">
    <location>
        <begin position="59"/>
        <end position="62"/>
    </location>
</feature>
<feature type="helix" evidence="17">
    <location>
        <begin position="76"/>
        <end position="98"/>
    </location>
</feature>
<feature type="strand" evidence="17">
    <location>
        <begin position="101"/>
        <end position="103"/>
    </location>
</feature>
<feature type="strand" evidence="17">
    <location>
        <begin position="108"/>
        <end position="111"/>
    </location>
</feature>
<feature type="helix" evidence="17">
    <location>
        <begin position="116"/>
        <end position="124"/>
    </location>
</feature>
<feature type="strand" evidence="17">
    <location>
        <begin position="128"/>
        <end position="132"/>
    </location>
</feature>
<feature type="helix" evidence="17">
    <location>
        <begin position="136"/>
        <end position="146"/>
    </location>
</feature>
<feature type="strand" evidence="17">
    <location>
        <begin position="155"/>
        <end position="159"/>
    </location>
</feature>
<feature type="helix" evidence="17">
    <location>
        <begin position="169"/>
        <end position="171"/>
    </location>
</feature>
<feature type="helix" evidence="16">
    <location>
        <begin position="175"/>
        <end position="177"/>
    </location>
</feature>
<feature type="helix" evidence="17">
    <location>
        <begin position="179"/>
        <end position="181"/>
    </location>
</feature>
<feature type="helix" evidence="17">
    <location>
        <begin position="182"/>
        <end position="191"/>
    </location>
</feature>
<feature type="turn" evidence="17">
    <location>
        <begin position="192"/>
        <end position="195"/>
    </location>
</feature>
<feature type="helix" evidence="17">
    <location>
        <begin position="196"/>
        <end position="198"/>
    </location>
</feature>
<feature type="strand" evidence="17">
    <location>
        <begin position="202"/>
        <end position="206"/>
    </location>
</feature>
<feature type="helix" evidence="17">
    <location>
        <begin position="208"/>
        <end position="219"/>
    </location>
</feature>
<feature type="strand" evidence="17">
    <location>
        <begin position="225"/>
        <end position="227"/>
    </location>
</feature>
<feature type="helix" evidence="17">
    <location>
        <begin position="234"/>
        <end position="236"/>
    </location>
</feature>
<feature type="strand" evidence="18">
    <location>
        <begin position="241"/>
        <end position="243"/>
    </location>
</feature>
<feature type="strand" evidence="17">
    <location>
        <begin position="246"/>
        <end position="250"/>
    </location>
</feature>
<feature type="strand" evidence="16">
    <location>
        <begin position="251"/>
        <end position="253"/>
    </location>
</feature>
<feature type="helix" evidence="17">
    <location>
        <begin position="259"/>
        <end position="264"/>
    </location>
</feature>
<feature type="strand" evidence="17">
    <location>
        <begin position="271"/>
        <end position="275"/>
    </location>
</feature>
<feature type="turn" evidence="16">
    <location>
        <begin position="277"/>
        <end position="279"/>
    </location>
</feature>
<feature type="helix" evidence="17">
    <location>
        <begin position="284"/>
        <end position="296"/>
    </location>
</feature>
<feature type="strand" evidence="17">
    <location>
        <begin position="301"/>
        <end position="304"/>
    </location>
</feature>
<feature type="helix" evidence="17">
    <location>
        <begin position="307"/>
        <end position="310"/>
    </location>
</feature>
<feature type="helix" evidence="17">
    <location>
        <begin position="317"/>
        <end position="320"/>
    </location>
</feature>
<feature type="turn" evidence="17">
    <location>
        <begin position="321"/>
        <end position="324"/>
    </location>
</feature>
<feature type="strand" evidence="17">
    <location>
        <begin position="325"/>
        <end position="329"/>
    </location>
</feature>
<feature type="helix" evidence="17">
    <location>
        <begin position="333"/>
        <end position="338"/>
    </location>
</feature>
<feature type="strand" evidence="17">
    <location>
        <begin position="342"/>
        <end position="347"/>
    </location>
</feature>
<feature type="helix" evidence="17">
    <location>
        <begin position="351"/>
        <end position="360"/>
    </location>
</feature>
<feature type="strand" evidence="17">
    <location>
        <begin position="364"/>
        <end position="366"/>
    </location>
</feature>
<feature type="helix" evidence="17">
    <location>
        <begin position="373"/>
        <end position="382"/>
    </location>
</feature>
<feature type="strand" evidence="17">
    <location>
        <begin position="386"/>
        <end position="389"/>
    </location>
</feature>
<feature type="helix" evidence="17">
    <location>
        <begin position="400"/>
        <end position="412"/>
    </location>
</feature>
<feature type="helix" evidence="17">
    <location>
        <begin position="416"/>
        <end position="434"/>
    </location>
</feature>
<feature type="helix" evidence="17">
    <location>
        <begin position="439"/>
        <end position="452"/>
    </location>
</feature>
<accession>K7NBW3</accession>
<reference key="1">
    <citation type="submission" date="2010-09" db="EMBL/GenBank/DDBJ databases">
        <title>Two B-glucosidase genes were isolated from the library of rhizopus stolonifer var. reflexus and expressed in Pichia pastoris.</title>
        <authorList>
            <person name="Tang B."/>
            <person name="Ding L."/>
            <person name="Zhang Q."/>
            <person name="Tang W."/>
            <person name="Pan H."/>
        </authorList>
    </citation>
    <scope>NUCLEOTIDE SEQUENCE [MRNA]</scope>
</reference>
<reference key="2">
    <citation type="journal article" date="2015" name="Plant Cell Physiol.">
        <title>Functional characterization of cucurbitadienol synthase and triterpene glycosyltransferase involved in biosynthesis of mogrosides from Siraitia grosvenorii.</title>
        <authorList>
            <person name="Dai L."/>
            <person name="Liu C."/>
            <person name="Zhu Y."/>
            <person name="Zhang J."/>
            <person name="Men Y."/>
            <person name="Zeng Y."/>
            <person name="Sun Y."/>
        </authorList>
    </citation>
    <scope>FUNCTION</scope>
    <scope>CATALYTIC ACTIVITY</scope>
    <scope>BIOPHYSICOCHEMICAL PROPERTIES</scope>
    <scope>PATHWAY</scope>
</reference>
<reference key="3">
    <citation type="journal article" date="2016" name="Proc. Natl. Acad. Sci. U.S.A.">
        <title>The biosynthetic pathway of the nonsugar, high-intensity sweetener mogroside V from Siraitia grosvenorii.</title>
        <authorList>
            <person name="Itkin M."/>
            <person name="Davidovich-Rikanati R."/>
            <person name="Cohen S."/>
            <person name="Portnoy V."/>
            <person name="Doron-Faigenboim A."/>
            <person name="Oren E."/>
            <person name="Freilich S."/>
            <person name="Tzuri G."/>
            <person name="Baranes N."/>
            <person name="Shen S."/>
            <person name="Petreikov M."/>
            <person name="Sertchook R."/>
            <person name="Ben-Dor S."/>
            <person name="Gottlieb H."/>
            <person name="Hernandez A."/>
            <person name="Nelson D.R."/>
            <person name="Paris H.S."/>
            <person name="Tadmor Y."/>
            <person name="Burger Y."/>
            <person name="Lewinsohn E."/>
            <person name="Katzir N."/>
            <person name="Schaffer A."/>
        </authorList>
    </citation>
    <scope>TISSUE SPECIFICITY</scope>
    <scope>GENE FAMILY</scope>
    <scope>NOMENCLATURE</scope>
</reference>
<reference key="4">
    <citation type="journal article" date="2022" name="IScience">
        <title>Glycosyltransferase engineering and multi-glycosylation routes development facilitating synthesis of high-intensity sweetener mogrosides.</title>
        <authorList>
            <person name="Li J."/>
            <person name="Mu S."/>
            <person name="Yang J."/>
            <person name="Liu C."/>
            <person name="Zhang Y."/>
            <person name="Chen P."/>
            <person name="Zeng Y."/>
            <person name="Zhu Y."/>
            <person name="Sun Y."/>
        </authorList>
    </citation>
    <scope>FUNCTION</scope>
    <scope>MUTAGENESIS OF SER-15; ARG-28; HIS-47; LEU-48; MET-76; THR-79 AND LEU-109</scope>
    <scope>BIOPHYSICOCHEMICAL PROPERTIES</scope>
    <scope>ACTIVITY REGULATION</scope>
    <scope>BIOTECHNOLOGY</scope>
    <scope>CATALYTIC ACTIVITY</scope>
</reference>
<reference key="5">
    <citation type="journal article" date="2020" name="ACS Catal.">
        <title>Efficient O-glycosylation of triterpenes enabled by protein engineering of plant glycosyltransferase UGT74AC1.</title>
        <authorList>
            <person name="Li J."/>
            <person name="Yang J.G."/>
            <person name="Mu S."/>
            <person name="Shang N."/>
            <person name="Liu C."/>
            <person name="Zhu Y."/>
            <person name="Cai Y."/>
            <person name="Liu P."/>
            <person name="Lin J."/>
            <person name="Liu W.D."/>
            <person name="Sun Y.X."/>
            <person name="Ma Y."/>
        </authorList>
    </citation>
    <scope>X-RAY CRYSTALLOGRAPHY (1.55 ANGSTROMS) IN COMPLEX WITH UDP-D-GLUCOSE</scope>
    <scope>DISULFIDE BONDS</scope>
    <scope>FUNCTION</scope>
    <scope>CATALYTIC ACTIVITY</scope>
    <scope>BIOPHYSICOCHEMICAL PROPERTIES</scope>
    <scope>MUTAGENESIS OF SER-15; HIS-18; ARG-28; HIS-47; LEU-48; MET-76; THR-79; LEU-109 AND ASP-111</scope>
</reference>
<protein>
    <recommendedName>
        <fullName evidence="9">Mogroside I-E synthase</fullName>
        <ecNumber evidence="3 5 6">2.4.1.350</ecNumber>
    </recommendedName>
    <alternativeName>
        <fullName evidence="8">UDP-glycosyltransferase 74-359-2</fullName>
        <shortName evidence="8">UGT74-359-2</shortName>
    </alternativeName>
    <alternativeName>
        <fullName evidence="7">UDP-glycosyltransferase 74AC1</fullName>
        <shortName evidence="7">SgUGT74AC1</shortName>
    </alternativeName>
</protein>
<sequence>MEKGDTHILVFPFPSQGHINPLLQLSKRLIAKGIKVSLVTTLHVSNHLQLQGAYSNSVKIEVISDGSEDRLETDTMRQTLDRFRQKMTKNLEDFLQKAMVSSNPPKFILYDSTMPWVLEVAKEFGLDRAPFYTQSCALNSINYHVLHGQLKLPPETPTISLPSMPLLRPSDLPAYDFDPASTDTIIDLLTSQYSNIQDANLLFCNTFDKLEGEIIQWMETLGRPVKTVGPTVPSAYLDKRVENDKHYGLSLFKPNEDVCLKWLDSKPSGSVLYVSYGSLVEMGEEQLKELALGIKETGKFFLWVVRDTEAEKLPPNFVESVAEKGLVVSWCSQLEVLAHPSVGCFFTHCGWNSTLEALCLGVPVVAFPQWADQVTNAKFLEDVWKVGKRVKRNEQRLASKEEVRSCIWEVMEGERASEFKSNSMEWKKWAKEAVDEGGSSDKNIEEFVAMLKQT</sequence>
<comment type="function">
    <text evidence="3 6">UDP-glycosyltransferase involved in the biosynthesis of cucurbitacin and mogroside tetracyclic triterpene natural products (e.g. siamenoside I and mogrosides IV, V and VI) (PubMed:25759326, Ref.5). Cucurbitacins have cytotoxic properties and exhibit deterrent taste as a defense barrier against herbivores (PubMed:25759326, Ref.5). Mogrosides are nonsugar highly oxygenated compounds used as high-intensity zero-calorie sweeteners; they also possess pharmacological properties such as regulating immunity, lowering blood sugar and lipid levels, protecting the liver, and acting as antioxidants and antitumor agents (PubMed:25759326, Ref.5). Catalyzes the transfer of a glucose moiety to the C-3 hydroxyl of mogrol to form mogroside I-E (PubMed:25759326, Ref.5). Besides mogrol, UGT74AC1 also shows activity in vitro with quercetin and naringenin as substrate (PubMed:25759326).</text>
</comment>
<comment type="catalytic activity">
    <reaction evidence="3 5 6">
        <text>mogrol + UDP-alpha-D-glucose = mogroside IE + UDP + H(+)</text>
        <dbReference type="Rhea" id="RHEA:52044"/>
        <dbReference type="ChEBI" id="CHEBI:15378"/>
        <dbReference type="ChEBI" id="CHEBI:58223"/>
        <dbReference type="ChEBI" id="CHEBI:58885"/>
        <dbReference type="ChEBI" id="CHEBI:138974"/>
        <dbReference type="ChEBI" id="CHEBI:138975"/>
        <dbReference type="EC" id="2.4.1.350"/>
    </reaction>
    <physiologicalReaction direction="left-to-right" evidence="3 5 6">
        <dbReference type="Rhea" id="RHEA:52045"/>
    </physiologicalReaction>
</comment>
<comment type="activity regulation">
    <text evidence="5">Activity is increased by Mg(2+).</text>
</comment>
<comment type="biophysicochemical properties">
    <kinetics>
        <KM evidence="3">41.4 uM for mogrol</KM>
        <KM evidence="6">49.4 uM for mogrol</KM>
        <KM evidence="6">890.2 uM for UDP-alpha-D-glucose</KM>
        <KM evidence="3">58.2 uM for quercetin</KM>
        <KM evidence="3">54.7 uM for naringenin</KM>
    </kinetics>
    <phDependence>
        <text evidence="5">Optimum pH is 7.</text>
    </phDependence>
    <temperatureDependence>
        <text evidence="5">Optimum temperature is 50 degrees Celsius.</text>
    </temperatureDependence>
</comment>
<comment type="pathway">
    <text evidence="3">Secondary metabolite biosynthesis; terpenoid biosynthesis.</text>
</comment>
<comment type="tissue specificity">
    <text evidence="4">Highly expressed in young fruits 15 days after anthesis (15-DAA).</text>
</comment>
<comment type="biotechnology">
    <text evidence="5">S.cerevisiae missing EXG1 but transformed to express S.grosvenorii optimized UGT74AC1 (UGTMG1) and UGT94-289-3 (UGTMS1-M7) cultured with mogrol and glucose accumulates mogrosides I-E, II-E, III-A and IV-A as a result of mogrol multi-glycosylation.</text>
</comment>
<comment type="miscellaneous">
    <text evidence="10">Mogrosides, the major active constituents of S.grosvenorii fruits, are a mixture of cucurbitane-type triterpenoid glycosides that have been proven to be powerful and zero-caloric sweeteners and can hence be used as a sucrose substitute for diabetic and obese patients.</text>
</comment>
<comment type="similarity">
    <text evidence="9">Belongs to the UDP-glycosyltransferase family.</text>
</comment>
<gene>
    <name evidence="7" type="primary">UGT74AC1</name>
    <name evidence="11" type="synonym">UDPG1</name>
</gene>
<keyword id="KW-0002">3D-structure</keyword>
<keyword id="KW-1015">Disulfide bond</keyword>
<keyword id="KW-0328">Glycosyltransferase</keyword>
<keyword id="KW-0808">Transferase</keyword>
<dbReference type="EC" id="2.4.1.350" evidence="3 5 6"/>
<dbReference type="EMBL" id="HQ259620">
    <property type="protein sequence ID" value="AEM42999.1"/>
    <property type="molecule type" value="mRNA"/>
</dbReference>
<dbReference type="PDB" id="6L8W">
    <property type="method" value="X-ray"/>
    <property type="resolution" value="2.05 A"/>
    <property type="chains" value="A=1-454"/>
</dbReference>
<dbReference type="PDB" id="6L8X">
    <property type="method" value="X-ray"/>
    <property type="resolution" value="1.55 A"/>
    <property type="chains" value="A=1-454"/>
</dbReference>
<dbReference type="PDB" id="6L8Z">
    <property type="method" value="X-ray"/>
    <property type="resolution" value="2.10 A"/>
    <property type="chains" value="A=1-454"/>
</dbReference>
<dbReference type="PDB" id="6L90">
    <property type="method" value="X-ray"/>
    <property type="resolution" value="2.02 A"/>
    <property type="chains" value="A=1-454"/>
</dbReference>
<dbReference type="PDB" id="8WVD">
    <property type="method" value="X-ray"/>
    <property type="resolution" value="1.66 A"/>
    <property type="chains" value="A=1-454"/>
</dbReference>
<dbReference type="PDBsum" id="6L8W"/>
<dbReference type="PDBsum" id="6L8X"/>
<dbReference type="PDBsum" id="6L8Z"/>
<dbReference type="PDBsum" id="6L90"/>
<dbReference type="PDBsum" id="8WVD"/>
<dbReference type="SMR" id="K7NBW3"/>
<dbReference type="KEGG" id="ag:AEM42999"/>
<dbReference type="BioCyc" id="MetaCyc:MONOMER-21296"/>
<dbReference type="BRENDA" id="2.4.1.350">
    <property type="organism ID" value="3400"/>
</dbReference>
<dbReference type="UniPathway" id="UPA00213"/>
<dbReference type="GO" id="GO:0080043">
    <property type="term" value="F:quercetin 3-O-glucosyltransferase activity"/>
    <property type="evidence" value="ECO:0007669"/>
    <property type="project" value="TreeGrafter"/>
</dbReference>
<dbReference type="GO" id="GO:0080044">
    <property type="term" value="F:quercetin 7-O-glucosyltransferase activity"/>
    <property type="evidence" value="ECO:0007669"/>
    <property type="project" value="TreeGrafter"/>
</dbReference>
<dbReference type="GO" id="GO:0035251">
    <property type="term" value="F:UDP-glucosyltransferase activity"/>
    <property type="evidence" value="ECO:0000314"/>
    <property type="project" value="UniProtKB"/>
</dbReference>
<dbReference type="CDD" id="cd03784">
    <property type="entry name" value="GT1_Gtf-like"/>
    <property type="match status" value="1"/>
</dbReference>
<dbReference type="FunFam" id="3.40.50.2000:FF:000019">
    <property type="entry name" value="Glycosyltransferase"/>
    <property type="match status" value="1"/>
</dbReference>
<dbReference type="Gene3D" id="3.40.50.2000">
    <property type="entry name" value="Glycogen Phosphorylase B"/>
    <property type="match status" value="2"/>
</dbReference>
<dbReference type="InterPro" id="IPR002213">
    <property type="entry name" value="UDP_glucos_trans"/>
</dbReference>
<dbReference type="InterPro" id="IPR035595">
    <property type="entry name" value="UDP_glycos_trans_CS"/>
</dbReference>
<dbReference type="PANTHER" id="PTHR11926">
    <property type="entry name" value="GLUCOSYL/GLUCURONOSYL TRANSFERASES"/>
    <property type="match status" value="1"/>
</dbReference>
<dbReference type="PANTHER" id="PTHR11926:SF1560">
    <property type="entry name" value="UDP-GLYCOSYLTRANSFERASE 74E1-RELATED"/>
    <property type="match status" value="1"/>
</dbReference>
<dbReference type="Pfam" id="PF00201">
    <property type="entry name" value="UDPGT"/>
    <property type="match status" value="1"/>
</dbReference>
<dbReference type="SUPFAM" id="SSF53756">
    <property type="entry name" value="UDP-Glycosyltransferase/glycogen phosphorylase"/>
    <property type="match status" value="1"/>
</dbReference>
<dbReference type="PROSITE" id="PS00375">
    <property type="entry name" value="UDPGT"/>
    <property type="match status" value="1"/>
</dbReference>
<evidence type="ECO:0000250" key="1">
    <source>
        <dbReference type="UniProtKB" id="A0A0A1HA03"/>
    </source>
</evidence>
<evidence type="ECO:0000250" key="2">
    <source>
        <dbReference type="UniProtKB" id="P51094"/>
    </source>
</evidence>
<evidence type="ECO:0000269" key="3">
    <source>
    </source>
</evidence>
<evidence type="ECO:0000269" key="4">
    <source>
    </source>
</evidence>
<evidence type="ECO:0000269" key="5">
    <source>
    </source>
</evidence>
<evidence type="ECO:0000269" key="6">
    <source ref="5"/>
</evidence>
<evidence type="ECO:0000303" key="7">
    <source>
    </source>
</evidence>
<evidence type="ECO:0000303" key="8">
    <source>
    </source>
</evidence>
<evidence type="ECO:0000305" key="9"/>
<evidence type="ECO:0000305" key="10">
    <source>
    </source>
</evidence>
<evidence type="ECO:0000312" key="11">
    <source>
        <dbReference type="EMBL" id="AEM42999.1"/>
    </source>
</evidence>
<evidence type="ECO:0007744" key="12">
    <source>
        <dbReference type="PDB" id="6L8W"/>
    </source>
</evidence>
<evidence type="ECO:0007744" key="13">
    <source>
        <dbReference type="PDB" id="6L8X"/>
    </source>
</evidence>
<evidence type="ECO:0007744" key="14">
    <source>
        <dbReference type="PDB" id="6L8Z"/>
    </source>
</evidence>
<evidence type="ECO:0007744" key="15">
    <source>
        <dbReference type="PDB" id="6L90"/>
    </source>
</evidence>
<evidence type="ECO:0007829" key="16">
    <source>
        <dbReference type="PDB" id="6L8W"/>
    </source>
</evidence>
<evidence type="ECO:0007829" key="17">
    <source>
        <dbReference type="PDB" id="6L8X"/>
    </source>
</evidence>
<evidence type="ECO:0007829" key="18">
    <source>
        <dbReference type="PDB" id="6L8Z"/>
    </source>
</evidence>
<name>74AC1_SIRGR</name>